<proteinExistence type="inferred from homology"/>
<keyword id="KW-0210">Decarboxylase</keyword>
<keyword id="KW-0456">Lyase</keyword>
<keyword id="KW-0460">Magnesium</keyword>
<keyword id="KW-0479">Metal-binding</keyword>
<keyword id="KW-1185">Reference proteome</keyword>
<name>OADC_PSEPK</name>
<reference key="1">
    <citation type="journal article" date="2002" name="Environ. Microbiol.">
        <title>Complete genome sequence and comparative analysis of the metabolically versatile Pseudomonas putida KT2440.</title>
        <authorList>
            <person name="Nelson K.E."/>
            <person name="Weinel C."/>
            <person name="Paulsen I.T."/>
            <person name="Dodson R.J."/>
            <person name="Hilbert H."/>
            <person name="Martins dos Santos V.A.P."/>
            <person name="Fouts D.E."/>
            <person name="Gill S.R."/>
            <person name="Pop M."/>
            <person name="Holmes M."/>
            <person name="Brinkac L.M."/>
            <person name="Beanan M.J."/>
            <person name="DeBoy R.T."/>
            <person name="Daugherty S.C."/>
            <person name="Kolonay J.F."/>
            <person name="Madupu R."/>
            <person name="Nelson W.C."/>
            <person name="White O."/>
            <person name="Peterson J.D."/>
            <person name="Khouri H.M."/>
            <person name="Hance I."/>
            <person name="Chris Lee P."/>
            <person name="Holtzapple E.K."/>
            <person name="Scanlan D."/>
            <person name="Tran K."/>
            <person name="Moazzez A."/>
            <person name="Utterback T.R."/>
            <person name="Rizzo M."/>
            <person name="Lee K."/>
            <person name="Kosack D."/>
            <person name="Moestl D."/>
            <person name="Wedler H."/>
            <person name="Lauber J."/>
            <person name="Stjepandic D."/>
            <person name="Hoheisel J."/>
            <person name="Straetz M."/>
            <person name="Heim S."/>
            <person name="Kiewitz C."/>
            <person name="Eisen J.A."/>
            <person name="Timmis K.N."/>
            <person name="Duesterhoeft A."/>
            <person name="Tuemmler B."/>
            <person name="Fraser C.M."/>
        </authorList>
    </citation>
    <scope>NUCLEOTIDE SEQUENCE [LARGE SCALE GENOMIC DNA]</scope>
    <source>
        <strain>ATCC 47054 / DSM 6125 / CFBP 8728 / NCIMB 11950 / KT2440</strain>
    </source>
</reference>
<sequence length="289" mass="31539">MPKASHQDLRFAFRELLASGSCFHTASVFDPMSARIAADLGFEVGILGGSVASLQVLAAPDFALITLSEFVEQATRIGRVAQLPVLADADHGYGNALNVMRTVIELERAGVAALTIEDTLLPAQFGRKSTDLIPVEEGVGKIRAALEARVDSSLSIIARTNAGVLSTEEIIVRTQSYQKAGADGICMVGVKDFEQLEQIAEHLTVPLMLVTYGNPNLRDDERLARLGVRIVVDGHAAYFAAIKATYDCLRLQRGRQNKSENLSATELSHTYTQPEDYIRWAKEYMSVEE</sequence>
<dbReference type="EC" id="4.1.1.112" evidence="1"/>
<dbReference type="EMBL" id="AE015451">
    <property type="protein sequence ID" value="AAN67012.1"/>
    <property type="status" value="ALT_INIT"/>
    <property type="molecule type" value="Genomic_DNA"/>
</dbReference>
<dbReference type="RefSeq" id="NP_743548.1">
    <property type="nucleotide sequence ID" value="NC_002947.4"/>
</dbReference>
<dbReference type="RefSeq" id="WP_003251963.1">
    <property type="nucleotide sequence ID" value="NZ_CP169744.1"/>
</dbReference>
<dbReference type="SMR" id="Q88N27"/>
<dbReference type="STRING" id="160488.PP_1389"/>
<dbReference type="PaxDb" id="160488-PP_1389"/>
<dbReference type="KEGG" id="ppu:PP_1389"/>
<dbReference type="PATRIC" id="fig|160488.4.peg.1473"/>
<dbReference type="eggNOG" id="COG2513">
    <property type="taxonomic scope" value="Bacteria"/>
</dbReference>
<dbReference type="HOGENOM" id="CLU_027389_3_2_6"/>
<dbReference type="OrthoDB" id="9771433at2"/>
<dbReference type="Proteomes" id="UP000000556">
    <property type="component" value="Chromosome"/>
</dbReference>
<dbReference type="GO" id="GO:0000287">
    <property type="term" value="F:magnesium ion binding"/>
    <property type="evidence" value="ECO:0007669"/>
    <property type="project" value="UniProtKB-UniRule"/>
</dbReference>
<dbReference type="GO" id="GO:0046421">
    <property type="term" value="F:methylisocitrate lyase activity"/>
    <property type="evidence" value="ECO:0007669"/>
    <property type="project" value="TreeGrafter"/>
</dbReference>
<dbReference type="GO" id="GO:0008948">
    <property type="term" value="F:oxaloacetate decarboxylase activity"/>
    <property type="evidence" value="ECO:0007669"/>
    <property type="project" value="UniProtKB-UniRule"/>
</dbReference>
<dbReference type="GO" id="GO:0006107">
    <property type="term" value="P:oxaloacetate metabolic process"/>
    <property type="evidence" value="ECO:0007669"/>
    <property type="project" value="UniProtKB-UniRule"/>
</dbReference>
<dbReference type="GO" id="GO:0019629">
    <property type="term" value="P:propionate catabolic process, 2-methylcitrate cycle"/>
    <property type="evidence" value="ECO:0007669"/>
    <property type="project" value="TreeGrafter"/>
</dbReference>
<dbReference type="GO" id="GO:0042866">
    <property type="term" value="P:pyruvate biosynthetic process"/>
    <property type="evidence" value="ECO:0007669"/>
    <property type="project" value="UniProtKB-UniRule"/>
</dbReference>
<dbReference type="CDD" id="cd00377">
    <property type="entry name" value="ICL_PEPM"/>
    <property type="match status" value="1"/>
</dbReference>
<dbReference type="Gene3D" id="3.20.20.60">
    <property type="entry name" value="Phosphoenolpyruvate-binding domains"/>
    <property type="match status" value="1"/>
</dbReference>
<dbReference type="HAMAP" id="MF_01299">
    <property type="entry name" value="OadC"/>
    <property type="match status" value="1"/>
</dbReference>
<dbReference type="InterPro" id="IPR039556">
    <property type="entry name" value="ICL/PEPM"/>
</dbReference>
<dbReference type="InterPro" id="IPR023687">
    <property type="entry name" value="Oxaloacetate_deCOase_bac"/>
</dbReference>
<dbReference type="InterPro" id="IPR015813">
    <property type="entry name" value="Pyrv/PenolPyrv_kinase-like_dom"/>
</dbReference>
<dbReference type="InterPro" id="IPR040442">
    <property type="entry name" value="Pyrv_kinase-like_dom_sf"/>
</dbReference>
<dbReference type="PANTHER" id="PTHR42905:SF3">
    <property type="entry name" value="OXALOACETATE DECARBOXYLASE"/>
    <property type="match status" value="1"/>
</dbReference>
<dbReference type="PANTHER" id="PTHR42905">
    <property type="entry name" value="PHOSPHOENOLPYRUVATE CARBOXYLASE"/>
    <property type="match status" value="1"/>
</dbReference>
<dbReference type="Pfam" id="PF13714">
    <property type="entry name" value="PEP_mutase"/>
    <property type="match status" value="1"/>
</dbReference>
<dbReference type="SUPFAM" id="SSF51621">
    <property type="entry name" value="Phosphoenolpyruvate/pyruvate domain"/>
    <property type="match status" value="1"/>
</dbReference>
<organism>
    <name type="scientific">Pseudomonas putida (strain ATCC 47054 / DSM 6125 / CFBP 8728 / NCIMB 11950 / KT2440)</name>
    <dbReference type="NCBI Taxonomy" id="160488"/>
    <lineage>
        <taxon>Bacteria</taxon>
        <taxon>Pseudomonadati</taxon>
        <taxon>Pseudomonadota</taxon>
        <taxon>Gammaproteobacteria</taxon>
        <taxon>Pseudomonadales</taxon>
        <taxon>Pseudomonadaceae</taxon>
        <taxon>Pseudomonas</taxon>
    </lineage>
</organism>
<feature type="chain" id="PRO_0000364068" description="Oxaloacetate decarboxylase">
    <location>
        <begin position="1"/>
        <end position="289"/>
    </location>
</feature>
<feature type="binding site" evidence="1">
    <location>
        <position position="50"/>
    </location>
    <ligand>
        <name>substrate</name>
    </ligand>
</feature>
<feature type="binding site" evidence="1">
    <location>
        <position position="88"/>
    </location>
    <ligand>
        <name>Mg(2+)</name>
        <dbReference type="ChEBI" id="CHEBI:18420"/>
    </ligand>
</feature>
<feature type="binding site" evidence="1">
    <location>
        <position position="159"/>
    </location>
    <ligand>
        <name>substrate</name>
    </ligand>
</feature>
<feature type="binding site" evidence="1">
    <location>
        <position position="235"/>
    </location>
    <ligand>
        <name>substrate</name>
    </ligand>
</feature>
<protein>
    <recommendedName>
        <fullName evidence="1">Oxaloacetate decarboxylase</fullName>
        <ecNumber evidence="1">4.1.1.112</ecNumber>
    </recommendedName>
</protein>
<evidence type="ECO:0000255" key="1">
    <source>
        <dbReference type="HAMAP-Rule" id="MF_01299"/>
    </source>
</evidence>
<evidence type="ECO:0000305" key="2"/>
<accession>Q88N27</accession>
<comment type="function">
    <text evidence="1">Catalyzes the decarboxylation of oxaloacetate into pyruvate. Seems to play a role in maintaining cellular concentrations of bicarbonate and pyruvate.</text>
</comment>
<comment type="catalytic activity">
    <reaction evidence="1">
        <text>oxaloacetate + H(+) = pyruvate + CO2</text>
        <dbReference type="Rhea" id="RHEA:15641"/>
        <dbReference type="ChEBI" id="CHEBI:15361"/>
        <dbReference type="ChEBI" id="CHEBI:15378"/>
        <dbReference type="ChEBI" id="CHEBI:16452"/>
        <dbReference type="ChEBI" id="CHEBI:16526"/>
        <dbReference type="EC" id="4.1.1.112"/>
    </reaction>
</comment>
<comment type="cofactor">
    <cofactor evidence="1">
        <name>Mg(2+)</name>
        <dbReference type="ChEBI" id="CHEBI:18420"/>
    </cofactor>
    <text evidence="1">Binds 1 Mg(2+) ion per subunit.</text>
</comment>
<comment type="subunit">
    <text evidence="1">Homotetramer; dimer of dimers.</text>
</comment>
<comment type="similarity">
    <text evidence="2">Belongs to the isocitrate lyase/PEP mutase superfamily. Oxaloacetate decarboxylase family.</text>
</comment>
<comment type="sequence caution" evidence="2">
    <conflict type="erroneous initiation">
        <sequence resource="EMBL-CDS" id="AAN67012"/>
    </conflict>
</comment>
<gene>
    <name type="ordered locus">PP_1389</name>
</gene>